<feature type="chain" id="PRO_0000193644" description="Eukaryotic translation initiation factor 4E-2">
    <location>
        <begin position="1"/>
        <end position="228"/>
    </location>
</feature>
<feature type="disulfide bond" evidence="1">
    <location>
        <begin position="130"/>
        <end position="134"/>
    </location>
</feature>
<sequence>MSEEPVAAPGTISHPVYKLKRNWTWWYLNDERNKSWEERLKNVKTFSSVGEFWALHDSIKPPSGLNPPSDYNVFRDGIEPMWEVPQNQNGGRWLITIEKGRTPEIMDTIWTEILMAMIGEQFSDDIESLCGIVCNVRGKGSKISVWTTNSADDGANLRIGGVLKQVLNNASMIHQRPLYDVLRYEDHESCQKKTSSGVKAKHAIYAVEPREEKAPVPVSTETPATPAT</sequence>
<evidence type="ECO:0000250" key="1"/>
<evidence type="ECO:0000269" key="2">
    <source>
    </source>
</evidence>
<evidence type="ECO:0000269" key="3">
    <source>
    </source>
</evidence>
<evidence type="ECO:0000269" key="4">
    <source>
    </source>
</evidence>
<evidence type="ECO:0000269" key="5">
    <source>
    </source>
</evidence>
<evidence type="ECO:0000305" key="6"/>
<accession>Q21693</accession>
<comment type="function">
    <text evidence="2 4 5">Recognizes and binds the 7-methylguanosine-containing mRNA cap during an early step in the initiation of protein synthesis and facilitates ribosome binding by inducing the unwinding of the mRNAs secondary structures. All 5 eIF4E proteins bind monomethyl cap structures. Only ife-1, ife-2 and ife-5 bind trimethyl cap structures which result from trans-splicing. Translation of trimethyl cap structure mRNAs may be regulated by intracellular redox state; disulfide bonds change the width and depth of the cap-binding cavity determining selectivity to mRNA caps (PubMed:10744754, PubMed:9553113). Probably by regulating mRNA translation in somatic cells, negatively regulates lifespan independently of daf-2/insulin and let-363/TOR pathways (PubMed:17277769). Negatively regulates resistance to oxidative stress (PubMed:17277769). May play a role in embryonic development (PubMed:17277769).</text>
</comment>
<comment type="subunit">
    <text>eIF4F is a multi-subunit complex, the composition of which varies with external and internal environmental conditions. It is composed of at least eIF4A, eIF4E and eIF4G. eIF4E is also known to interact with other partners.</text>
</comment>
<comment type="interaction">
    <interactant intactId="EBI-330154">
        <id>Q21693</id>
    </interactant>
    <interactant intactId="EBI-330111">
        <id>Q9XW13</id>
        <label>mxt-1</label>
    </interactant>
    <organismsDiffer>false</organismsDiffer>
    <experiments>5</experiments>
</comment>
<comment type="tissue specificity">
    <text evidence="3 4">Highly expressed in all somatic tissues.</text>
</comment>
<comment type="developmental stage">
    <text evidence="4">Expressed at the 2-fold embryonic stage and throughout larval stages and adulthood.</text>
</comment>
<comment type="disruption phenotype">
    <text evidence="4">RNAi-mediated knockdown increases lifespan. Lifespan is further increased in an age-1 hx546, daf-2 e1370, clk-1 qm30 or eat-2 ad465 mutant background.</text>
</comment>
<comment type="similarity">
    <text evidence="6">Belongs to the eukaryotic initiation factor 4E family.</text>
</comment>
<reference key="1">
    <citation type="journal article" date="1998" name="J. Biol. Chem.">
        <title>Multiple isoforms of eukaryotic protein synthesis initiation factor 4E in Caenorhabditis elegans can distinguish between mono- and trimethylated mRNA cap structures.</title>
        <authorList>
            <person name="Jankowska-Anyszka M."/>
            <person name="Lamphear B.J."/>
            <person name="Aamodt E.J."/>
            <person name="Harrington T."/>
            <person name="Darzynkiewicz E."/>
            <person name="Stolarski R."/>
            <person name="Rhoads R.E."/>
        </authorList>
    </citation>
    <scope>NUCLEOTIDE SEQUENCE [GENOMIC DNA]</scope>
    <scope>FUNCTION</scope>
    <source>
        <strain>Bristol N2</strain>
    </source>
</reference>
<reference key="2">
    <citation type="journal article" date="1998" name="Science">
        <title>Genome sequence of the nematode C. elegans: a platform for investigating biology.</title>
        <authorList>
            <consortium name="The C. elegans sequencing consortium"/>
        </authorList>
    </citation>
    <scope>NUCLEOTIDE SEQUENCE [LARGE SCALE GENOMIC DNA]</scope>
    <source>
        <strain>Bristol N2</strain>
    </source>
</reference>
<reference key="3">
    <citation type="journal article" date="2000" name="J. Biol. Chem.">
        <title>Functional characterization of five eIF4E isoforms in Caenorhabditis elegans.</title>
        <authorList>
            <person name="Keiper B.D."/>
            <person name="Lamphear B.J."/>
            <person name="Deshpande A.M."/>
            <person name="Jankowska-Anyszka M."/>
            <person name="Aamodt E.J."/>
            <person name="Blumenthal T."/>
            <person name="Rhoads R.E."/>
        </authorList>
    </citation>
    <scope>FUNCTION</scope>
    <source>
        <strain>Bristol N2</strain>
    </source>
</reference>
<reference key="4">
    <citation type="journal article" date="2001" name="Development">
        <title>An isoform of eIF4E is a component of germ granules and is required for spermatogenesis in C. elegans.</title>
        <authorList>
            <person name="Amiri A."/>
            <person name="Keiper B.D."/>
            <person name="Kawasaki I."/>
            <person name="Fan Y."/>
            <person name="Kohara Y."/>
            <person name="Rhoads R.E."/>
            <person name="Strome S."/>
        </authorList>
    </citation>
    <scope>TISSUE SPECIFICITY</scope>
    <source>
        <strain>Bristol N2</strain>
    </source>
</reference>
<reference key="5">
    <citation type="journal article" date="2007" name="Nature">
        <title>eIF4E function in somatic cells modulates ageing in Caenorhabditis elegans.</title>
        <authorList>
            <person name="Syntichaki P."/>
            <person name="Troulinaki K."/>
            <person name="Tavernarakis N."/>
        </authorList>
    </citation>
    <scope>FUNCTION</scope>
    <scope>TISSUE SPECIFICITY</scope>
    <scope>DEVELOPMENTAL STAGE</scope>
    <scope>DISRUPTION PHENOTYPE</scope>
</reference>
<organism>
    <name type="scientific">Caenorhabditis elegans</name>
    <dbReference type="NCBI Taxonomy" id="6239"/>
    <lineage>
        <taxon>Eukaryota</taxon>
        <taxon>Metazoa</taxon>
        <taxon>Ecdysozoa</taxon>
        <taxon>Nematoda</taxon>
        <taxon>Chromadorea</taxon>
        <taxon>Rhabditida</taxon>
        <taxon>Rhabditina</taxon>
        <taxon>Rhabditomorpha</taxon>
        <taxon>Rhabditoidea</taxon>
        <taxon>Rhabditidae</taxon>
        <taxon>Peloderinae</taxon>
        <taxon>Caenorhabditis</taxon>
    </lineage>
</organism>
<keyword id="KW-1015">Disulfide bond</keyword>
<keyword id="KW-0396">Initiation factor</keyword>
<keyword id="KW-0648">Protein biosynthesis</keyword>
<keyword id="KW-1185">Reference proteome</keyword>
<keyword id="KW-0694">RNA-binding</keyword>
<keyword id="KW-0810">Translation regulation</keyword>
<name>IF4E2_CAEEL</name>
<proteinExistence type="evidence at protein level"/>
<dbReference type="EMBL" id="FO080331">
    <property type="protein sequence ID" value="CCD62912.1"/>
    <property type="molecule type" value="Genomic_DNA"/>
</dbReference>
<dbReference type="PIR" id="T16678">
    <property type="entry name" value="T16678"/>
</dbReference>
<dbReference type="RefSeq" id="NP_508094.1">
    <property type="nucleotide sequence ID" value="NM_075693.6"/>
</dbReference>
<dbReference type="SMR" id="Q21693"/>
<dbReference type="BioGRID" id="45346">
    <property type="interactions" value="7"/>
</dbReference>
<dbReference type="DIP" id="DIP-25396N"/>
<dbReference type="FunCoup" id="Q21693">
    <property type="interactions" value="796"/>
</dbReference>
<dbReference type="IntAct" id="Q21693">
    <property type="interactions" value="1"/>
</dbReference>
<dbReference type="STRING" id="6239.R04A9.4.1"/>
<dbReference type="iPTMnet" id="Q21693"/>
<dbReference type="PaxDb" id="6239-R04A9.4"/>
<dbReference type="PeptideAtlas" id="Q21693"/>
<dbReference type="EnsemblMetazoa" id="R04A9.4.1">
    <property type="protein sequence ID" value="R04A9.4.1"/>
    <property type="gene ID" value="WBGene00002060"/>
</dbReference>
<dbReference type="GeneID" id="180393"/>
<dbReference type="KEGG" id="cel:CELE_R04A9.4"/>
<dbReference type="UCSC" id="R04A9.4">
    <property type="organism name" value="c. elegans"/>
</dbReference>
<dbReference type="AGR" id="WB:WBGene00002060"/>
<dbReference type="CTD" id="180393"/>
<dbReference type="WormBase" id="R04A9.4">
    <property type="protein sequence ID" value="CE04791"/>
    <property type="gene ID" value="WBGene00002060"/>
    <property type="gene designation" value="ife-2"/>
</dbReference>
<dbReference type="eggNOG" id="KOG1670">
    <property type="taxonomic scope" value="Eukaryota"/>
</dbReference>
<dbReference type="HOGENOM" id="CLU_043552_1_0_1"/>
<dbReference type="InParanoid" id="Q21693"/>
<dbReference type="OMA" id="GNAWETE"/>
<dbReference type="OrthoDB" id="590761at2759"/>
<dbReference type="PhylomeDB" id="Q21693"/>
<dbReference type="Reactome" id="R-CEL-1169408">
    <property type="pathway name" value="ISG15 antiviral mechanism"/>
</dbReference>
<dbReference type="Reactome" id="R-CEL-156827">
    <property type="pathway name" value="L13a-mediated translational silencing of Ceruloplasmin expression"/>
</dbReference>
<dbReference type="Reactome" id="R-CEL-72649">
    <property type="pathway name" value="Translation initiation complex formation"/>
</dbReference>
<dbReference type="Reactome" id="R-CEL-72662">
    <property type="pathway name" value="Activation of the mRNA upon binding of the cap-binding complex and eIFs, and subsequent binding to 43S"/>
</dbReference>
<dbReference type="Reactome" id="R-CEL-72702">
    <property type="pathway name" value="Ribosomal scanning and start codon recognition"/>
</dbReference>
<dbReference type="PRO" id="PR:Q21693"/>
<dbReference type="Proteomes" id="UP000001940">
    <property type="component" value="Chromosome X"/>
</dbReference>
<dbReference type="Bgee" id="WBGene00002060">
    <property type="expression patterns" value="Expressed in pharyngeal muscle cell (C elegans) and 4 other cell types or tissues"/>
</dbReference>
<dbReference type="GO" id="GO:0010494">
    <property type="term" value="C:cytoplasmic stress granule"/>
    <property type="evidence" value="ECO:0000314"/>
    <property type="project" value="WormBase"/>
</dbReference>
<dbReference type="GO" id="GO:0016281">
    <property type="term" value="C:eukaryotic translation initiation factor 4F complex"/>
    <property type="evidence" value="ECO:0000318"/>
    <property type="project" value="GO_Central"/>
</dbReference>
<dbReference type="GO" id="GO:0000340">
    <property type="term" value="F:RNA 7-methylguanosine cap binding"/>
    <property type="evidence" value="ECO:0000314"/>
    <property type="project" value="WormBase"/>
</dbReference>
<dbReference type="GO" id="GO:0000341">
    <property type="term" value="F:RNA trimethylguanosine cap binding"/>
    <property type="evidence" value="ECO:0000314"/>
    <property type="project" value="WormBase"/>
</dbReference>
<dbReference type="GO" id="GO:0003743">
    <property type="term" value="F:translation initiation factor activity"/>
    <property type="evidence" value="ECO:0000318"/>
    <property type="project" value="GO_Central"/>
</dbReference>
<dbReference type="GO" id="GO:0008340">
    <property type="term" value="P:determination of adult lifespan"/>
    <property type="evidence" value="ECO:0000315"/>
    <property type="project" value="UniProtKB"/>
</dbReference>
<dbReference type="GO" id="GO:0009792">
    <property type="term" value="P:embryo development ending in birth or egg hatching"/>
    <property type="evidence" value="ECO:0000316"/>
    <property type="project" value="WormBase"/>
</dbReference>
<dbReference type="GO" id="GO:1902883">
    <property type="term" value="P:negative regulation of response to oxidative stress"/>
    <property type="evidence" value="ECO:0000315"/>
    <property type="project" value="UniProtKB"/>
</dbReference>
<dbReference type="GO" id="GO:0045727">
    <property type="term" value="P:positive regulation of translation"/>
    <property type="evidence" value="ECO:0000315"/>
    <property type="project" value="UniProtKB"/>
</dbReference>
<dbReference type="GO" id="GO:0006413">
    <property type="term" value="P:translational initiation"/>
    <property type="evidence" value="ECO:0000318"/>
    <property type="project" value="GO_Central"/>
</dbReference>
<dbReference type="FunFam" id="3.30.760.10:FF:000017">
    <property type="entry name" value="Eukaryotic translation initiation factor 4E-1"/>
    <property type="match status" value="1"/>
</dbReference>
<dbReference type="Gene3D" id="3.30.760.10">
    <property type="entry name" value="RNA Cap, Translation Initiation Factor Eif4e"/>
    <property type="match status" value="1"/>
</dbReference>
<dbReference type="InterPro" id="IPR023398">
    <property type="entry name" value="TIF_eIF4e-like"/>
</dbReference>
<dbReference type="InterPro" id="IPR001040">
    <property type="entry name" value="TIF_eIF_4E"/>
</dbReference>
<dbReference type="InterPro" id="IPR019770">
    <property type="entry name" value="TIF_eIF_4E_CS"/>
</dbReference>
<dbReference type="PANTHER" id="PTHR11960">
    <property type="entry name" value="EUKARYOTIC TRANSLATION INITIATION FACTOR 4E RELATED"/>
    <property type="match status" value="1"/>
</dbReference>
<dbReference type="PANTHER" id="PTHR11960:SF11">
    <property type="entry name" value="EUKARYOTIC TRANSLATION INITIATION FACTOR 4E-2"/>
    <property type="match status" value="1"/>
</dbReference>
<dbReference type="Pfam" id="PF01652">
    <property type="entry name" value="IF4E"/>
    <property type="match status" value="1"/>
</dbReference>
<dbReference type="SUPFAM" id="SSF55418">
    <property type="entry name" value="eIF4e-like"/>
    <property type="match status" value="1"/>
</dbReference>
<dbReference type="PROSITE" id="PS00813">
    <property type="entry name" value="IF4E"/>
    <property type="match status" value="1"/>
</dbReference>
<gene>
    <name type="primary">ife-2</name>
    <name type="ORF">R04A9.4</name>
</gene>
<protein>
    <recommendedName>
        <fullName>Eukaryotic translation initiation factor 4E-2</fullName>
        <shortName>eIF-4E-2</shortName>
        <shortName>eIF4E-2</shortName>
    </recommendedName>
    <alternativeName>
        <fullName>eIF-4F 25 kDa subunit</fullName>
    </alternativeName>
    <alternativeName>
        <fullName>mRNA cap-binding protein</fullName>
    </alternativeName>
</protein>